<accession>Q5WLQ5</accession>
<protein>
    <recommendedName>
        <fullName evidence="1">Large ribosomal subunit protein uL16</fullName>
    </recommendedName>
    <alternativeName>
        <fullName evidence="2">50S ribosomal protein L16</fullName>
    </alternativeName>
</protein>
<keyword id="KW-1185">Reference proteome</keyword>
<keyword id="KW-0687">Ribonucleoprotein</keyword>
<keyword id="KW-0689">Ribosomal protein</keyword>
<keyword id="KW-0694">RNA-binding</keyword>
<keyword id="KW-0699">rRNA-binding</keyword>
<keyword id="KW-0820">tRNA-binding</keyword>
<proteinExistence type="inferred from homology"/>
<evidence type="ECO:0000255" key="1">
    <source>
        <dbReference type="HAMAP-Rule" id="MF_01342"/>
    </source>
</evidence>
<evidence type="ECO:0000305" key="2"/>
<comment type="function">
    <text evidence="1">Binds 23S rRNA and is also seen to make contacts with the A and possibly P site tRNAs.</text>
</comment>
<comment type="subunit">
    <text evidence="1">Part of the 50S ribosomal subunit.</text>
</comment>
<comment type="similarity">
    <text evidence="1">Belongs to the universal ribosomal protein uL16 family.</text>
</comment>
<name>RL16_SHOC1</name>
<reference key="1">
    <citation type="submission" date="2003-10" db="EMBL/GenBank/DDBJ databases">
        <title>The complete genome sequence of the alkaliphilic Bacillus clausii KSM-K16.</title>
        <authorList>
            <person name="Takaki Y."/>
            <person name="Kageyama Y."/>
            <person name="Shimamura S."/>
            <person name="Suzuki H."/>
            <person name="Nishi S."/>
            <person name="Hatada Y."/>
            <person name="Kawai S."/>
            <person name="Ito S."/>
            <person name="Horikoshi K."/>
        </authorList>
    </citation>
    <scope>NUCLEOTIDE SEQUENCE [LARGE SCALE GENOMIC DNA]</scope>
    <source>
        <strain>KSM-K16</strain>
    </source>
</reference>
<feature type="chain" id="PRO_0000062039" description="Large ribosomal subunit protein uL16">
    <location>
        <begin position="1"/>
        <end position="145"/>
    </location>
</feature>
<organism>
    <name type="scientific">Shouchella clausii (strain KSM-K16)</name>
    <name type="common">Alkalihalobacillus clausii</name>
    <dbReference type="NCBI Taxonomy" id="66692"/>
    <lineage>
        <taxon>Bacteria</taxon>
        <taxon>Bacillati</taxon>
        <taxon>Bacillota</taxon>
        <taxon>Bacilli</taxon>
        <taxon>Bacillales</taxon>
        <taxon>Bacillaceae</taxon>
        <taxon>Shouchella</taxon>
    </lineage>
</organism>
<sequence>MLMPKRVKYRREHRGKMRGRAKGGTEVHFGEFGLQALEASWITNRQIEAARIAMTRYMKRGGKVWIKIFPSKPYTAKPLEVRMGSGKGAPEGWVAVVKPGKIMFEISGVSEEVAREALRLASHKLPIKCKFVKREEVGGDSNESN</sequence>
<dbReference type="EMBL" id="AP006627">
    <property type="protein sequence ID" value="BAD62700.1"/>
    <property type="molecule type" value="Genomic_DNA"/>
</dbReference>
<dbReference type="RefSeq" id="WP_011245021.1">
    <property type="nucleotide sequence ID" value="NC_006582.1"/>
</dbReference>
<dbReference type="SMR" id="Q5WLQ5"/>
<dbReference type="STRING" id="66692.ABC0157"/>
<dbReference type="GeneID" id="86924193"/>
<dbReference type="KEGG" id="bcl:ABC0157"/>
<dbReference type="eggNOG" id="COG0197">
    <property type="taxonomic scope" value="Bacteria"/>
</dbReference>
<dbReference type="HOGENOM" id="CLU_078858_2_1_9"/>
<dbReference type="OrthoDB" id="9802589at2"/>
<dbReference type="Proteomes" id="UP000001168">
    <property type="component" value="Chromosome"/>
</dbReference>
<dbReference type="GO" id="GO:0022625">
    <property type="term" value="C:cytosolic large ribosomal subunit"/>
    <property type="evidence" value="ECO:0007669"/>
    <property type="project" value="TreeGrafter"/>
</dbReference>
<dbReference type="GO" id="GO:0019843">
    <property type="term" value="F:rRNA binding"/>
    <property type="evidence" value="ECO:0007669"/>
    <property type="project" value="UniProtKB-UniRule"/>
</dbReference>
<dbReference type="GO" id="GO:0003735">
    <property type="term" value="F:structural constituent of ribosome"/>
    <property type="evidence" value="ECO:0007669"/>
    <property type="project" value="InterPro"/>
</dbReference>
<dbReference type="GO" id="GO:0000049">
    <property type="term" value="F:tRNA binding"/>
    <property type="evidence" value="ECO:0007669"/>
    <property type="project" value="UniProtKB-KW"/>
</dbReference>
<dbReference type="GO" id="GO:0006412">
    <property type="term" value="P:translation"/>
    <property type="evidence" value="ECO:0007669"/>
    <property type="project" value="UniProtKB-UniRule"/>
</dbReference>
<dbReference type="CDD" id="cd01433">
    <property type="entry name" value="Ribosomal_L16_L10e"/>
    <property type="match status" value="1"/>
</dbReference>
<dbReference type="FunFam" id="3.90.1170.10:FF:000001">
    <property type="entry name" value="50S ribosomal protein L16"/>
    <property type="match status" value="1"/>
</dbReference>
<dbReference type="Gene3D" id="3.90.1170.10">
    <property type="entry name" value="Ribosomal protein L10e/L16"/>
    <property type="match status" value="1"/>
</dbReference>
<dbReference type="HAMAP" id="MF_01342">
    <property type="entry name" value="Ribosomal_uL16"/>
    <property type="match status" value="1"/>
</dbReference>
<dbReference type="InterPro" id="IPR047873">
    <property type="entry name" value="Ribosomal_uL16"/>
</dbReference>
<dbReference type="InterPro" id="IPR000114">
    <property type="entry name" value="Ribosomal_uL16_bact-type"/>
</dbReference>
<dbReference type="InterPro" id="IPR020798">
    <property type="entry name" value="Ribosomal_uL16_CS"/>
</dbReference>
<dbReference type="InterPro" id="IPR016180">
    <property type="entry name" value="Ribosomal_uL16_dom"/>
</dbReference>
<dbReference type="InterPro" id="IPR036920">
    <property type="entry name" value="Ribosomal_uL16_sf"/>
</dbReference>
<dbReference type="NCBIfam" id="TIGR01164">
    <property type="entry name" value="rplP_bact"/>
    <property type="match status" value="1"/>
</dbReference>
<dbReference type="PANTHER" id="PTHR12220">
    <property type="entry name" value="50S/60S RIBOSOMAL PROTEIN L16"/>
    <property type="match status" value="1"/>
</dbReference>
<dbReference type="PANTHER" id="PTHR12220:SF13">
    <property type="entry name" value="LARGE RIBOSOMAL SUBUNIT PROTEIN UL16M"/>
    <property type="match status" value="1"/>
</dbReference>
<dbReference type="Pfam" id="PF00252">
    <property type="entry name" value="Ribosomal_L16"/>
    <property type="match status" value="1"/>
</dbReference>
<dbReference type="PRINTS" id="PR00060">
    <property type="entry name" value="RIBOSOMALL16"/>
</dbReference>
<dbReference type="SUPFAM" id="SSF54686">
    <property type="entry name" value="Ribosomal protein L16p/L10e"/>
    <property type="match status" value="1"/>
</dbReference>
<dbReference type="PROSITE" id="PS00586">
    <property type="entry name" value="RIBOSOMAL_L16_1"/>
    <property type="match status" value="1"/>
</dbReference>
<dbReference type="PROSITE" id="PS00701">
    <property type="entry name" value="RIBOSOMAL_L16_2"/>
    <property type="match status" value="1"/>
</dbReference>
<gene>
    <name evidence="1" type="primary">rplP</name>
    <name type="ordered locus">ABC0157</name>
</gene>